<feature type="chain" id="PRO_0000345763" description="tRNA modification GTPase MnmE">
    <location>
        <begin position="1"/>
        <end position="461"/>
    </location>
</feature>
<feature type="domain" description="TrmE-type G">
    <location>
        <begin position="223"/>
        <end position="383"/>
    </location>
</feature>
<feature type="binding site" evidence="1">
    <location>
        <position position="23"/>
    </location>
    <ligand>
        <name>(6S)-5-formyl-5,6,7,8-tetrahydrofolate</name>
        <dbReference type="ChEBI" id="CHEBI:57457"/>
    </ligand>
</feature>
<feature type="binding site" evidence="1">
    <location>
        <position position="88"/>
    </location>
    <ligand>
        <name>(6S)-5-formyl-5,6,7,8-tetrahydrofolate</name>
        <dbReference type="ChEBI" id="CHEBI:57457"/>
    </ligand>
</feature>
<feature type="binding site" evidence="1">
    <location>
        <position position="127"/>
    </location>
    <ligand>
        <name>(6S)-5-formyl-5,6,7,8-tetrahydrofolate</name>
        <dbReference type="ChEBI" id="CHEBI:57457"/>
    </ligand>
</feature>
<feature type="binding site" evidence="1">
    <location>
        <begin position="233"/>
        <end position="238"/>
    </location>
    <ligand>
        <name>GTP</name>
        <dbReference type="ChEBI" id="CHEBI:37565"/>
    </ligand>
</feature>
<feature type="binding site" evidence="1">
    <location>
        <position position="233"/>
    </location>
    <ligand>
        <name>K(+)</name>
        <dbReference type="ChEBI" id="CHEBI:29103"/>
    </ligand>
</feature>
<feature type="binding site" evidence="1">
    <location>
        <position position="237"/>
    </location>
    <ligand>
        <name>Mg(2+)</name>
        <dbReference type="ChEBI" id="CHEBI:18420"/>
    </ligand>
</feature>
<feature type="binding site" evidence="1">
    <location>
        <begin position="252"/>
        <end position="258"/>
    </location>
    <ligand>
        <name>GTP</name>
        <dbReference type="ChEBI" id="CHEBI:37565"/>
    </ligand>
</feature>
<feature type="binding site" evidence="1">
    <location>
        <position position="252"/>
    </location>
    <ligand>
        <name>K(+)</name>
        <dbReference type="ChEBI" id="CHEBI:29103"/>
    </ligand>
</feature>
<feature type="binding site" evidence="1">
    <location>
        <position position="254"/>
    </location>
    <ligand>
        <name>K(+)</name>
        <dbReference type="ChEBI" id="CHEBI:29103"/>
    </ligand>
</feature>
<feature type="binding site" evidence="1">
    <location>
        <position position="257"/>
    </location>
    <ligand>
        <name>K(+)</name>
        <dbReference type="ChEBI" id="CHEBI:29103"/>
    </ligand>
</feature>
<feature type="binding site" evidence="1">
    <location>
        <position position="258"/>
    </location>
    <ligand>
        <name>Mg(2+)</name>
        <dbReference type="ChEBI" id="CHEBI:18420"/>
    </ligand>
</feature>
<feature type="binding site" evidence="1">
    <location>
        <begin position="277"/>
        <end position="280"/>
    </location>
    <ligand>
        <name>GTP</name>
        <dbReference type="ChEBI" id="CHEBI:37565"/>
    </ligand>
</feature>
<feature type="binding site" evidence="1">
    <location>
        <position position="461"/>
    </location>
    <ligand>
        <name>(6S)-5-formyl-5,6,7,8-tetrahydrofolate</name>
        <dbReference type="ChEBI" id="CHEBI:57457"/>
    </ligand>
</feature>
<organism>
    <name type="scientific">Clostridium botulinum (strain Loch Maree / Type A3)</name>
    <dbReference type="NCBI Taxonomy" id="498214"/>
    <lineage>
        <taxon>Bacteria</taxon>
        <taxon>Bacillati</taxon>
        <taxon>Bacillota</taxon>
        <taxon>Clostridia</taxon>
        <taxon>Eubacteriales</taxon>
        <taxon>Clostridiaceae</taxon>
        <taxon>Clostridium</taxon>
    </lineage>
</organism>
<sequence>MKEFDTITAVATPVGEGGISIIRISGDKSLDIVSSIFKGKNDRSLDDIKPYSMRYGFIIEKESKEIIDEVLVSYMKGPRSFTAEDTLEINCHGGVIPTKKILKELIKSGARLAEPGEFTKRAFLNGRIDLSQAEAVIDIIRSKTDLSMKSALKQAEGTLSKEINSIRNRMIKIIAHIEATVDYPEDDLEEITGQKIKVDLKEIINKIDNLISASEEGKILREGLNTVIVGKPNVGKSSLLNALINENKAIVTEIPGTTRDVIEEYINIDGIPIKIVDTAGIRETEDVVEKIGVEKSKEKIDEADLVIFMLDLSRKIDEEDIEIMDFIKNKKYIVLLNKLDLNKDLNEENHFIKELDSKYIIKTSVKNNSGLNELKECIKNLFFSGEIKSDELIVTNARHQEALIRSRESCIQAIETLSDEISIDLASIDIRNAWKYLGEITGDTLDENIIDKIFSEFCLGK</sequence>
<keyword id="KW-0963">Cytoplasm</keyword>
<keyword id="KW-0342">GTP-binding</keyword>
<keyword id="KW-0378">Hydrolase</keyword>
<keyword id="KW-0460">Magnesium</keyword>
<keyword id="KW-0479">Metal-binding</keyword>
<keyword id="KW-0547">Nucleotide-binding</keyword>
<keyword id="KW-0630">Potassium</keyword>
<keyword id="KW-0819">tRNA processing</keyword>
<name>MNME_CLOBM</name>
<evidence type="ECO:0000255" key="1">
    <source>
        <dbReference type="HAMAP-Rule" id="MF_00379"/>
    </source>
</evidence>
<reference key="1">
    <citation type="journal article" date="2007" name="PLoS ONE">
        <title>Analysis of the neurotoxin complex genes in Clostridium botulinum A1-A4 and B1 strains: BoNT/A3, /Ba4 and /B1 clusters are located within plasmids.</title>
        <authorList>
            <person name="Smith T.J."/>
            <person name="Hill K.K."/>
            <person name="Foley B.T."/>
            <person name="Detter J.C."/>
            <person name="Munk A.C."/>
            <person name="Bruce D.C."/>
            <person name="Doggett N.A."/>
            <person name="Smith L.A."/>
            <person name="Marks J.D."/>
            <person name="Xie G."/>
            <person name="Brettin T.S."/>
        </authorList>
    </citation>
    <scope>NUCLEOTIDE SEQUENCE [LARGE SCALE GENOMIC DNA]</scope>
    <source>
        <strain>Loch Maree / Type A3</strain>
    </source>
</reference>
<protein>
    <recommendedName>
        <fullName evidence="1">tRNA modification GTPase MnmE</fullName>
        <ecNumber evidence="1">3.6.-.-</ecNumber>
    </recommendedName>
</protein>
<proteinExistence type="inferred from homology"/>
<gene>
    <name evidence="1" type="primary">mnmE</name>
    <name evidence="1" type="synonym">trmE</name>
    <name type="ordered locus">CLK_3127</name>
</gene>
<dbReference type="EC" id="3.6.-.-" evidence="1"/>
<dbReference type="EMBL" id="CP000962">
    <property type="protein sequence ID" value="ACA54142.1"/>
    <property type="molecule type" value="Genomic_DNA"/>
</dbReference>
<dbReference type="RefSeq" id="WP_012342281.1">
    <property type="nucleotide sequence ID" value="NC_010520.1"/>
</dbReference>
<dbReference type="SMR" id="B1KUB2"/>
<dbReference type="KEGG" id="cbl:CLK_3127"/>
<dbReference type="HOGENOM" id="CLU_019624_4_1_9"/>
<dbReference type="GO" id="GO:0005829">
    <property type="term" value="C:cytosol"/>
    <property type="evidence" value="ECO:0007669"/>
    <property type="project" value="TreeGrafter"/>
</dbReference>
<dbReference type="GO" id="GO:0005525">
    <property type="term" value="F:GTP binding"/>
    <property type="evidence" value="ECO:0007669"/>
    <property type="project" value="UniProtKB-UniRule"/>
</dbReference>
<dbReference type="GO" id="GO:0003924">
    <property type="term" value="F:GTPase activity"/>
    <property type="evidence" value="ECO:0007669"/>
    <property type="project" value="UniProtKB-UniRule"/>
</dbReference>
<dbReference type="GO" id="GO:0046872">
    <property type="term" value="F:metal ion binding"/>
    <property type="evidence" value="ECO:0007669"/>
    <property type="project" value="UniProtKB-KW"/>
</dbReference>
<dbReference type="GO" id="GO:0030488">
    <property type="term" value="P:tRNA methylation"/>
    <property type="evidence" value="ECO:0007669"/>
    <property type="project" value="TreeGrafter"/>
</dbReference>
<dbReference type="GO" id="GO:0002098">
    <property type="term" value="P:tRNA wobble uridine modification"/>
    <property type="evidence" value="ECO:0007669"/>
    <property type="project" value="TreeGrafter"/>
</dbReference>
<dbReference type="CDD" id="cd04164">
    <property type="entry name" value="trmE"/>
    <property type="match status" value="1"/>
</dbReference>
<dbReference type="CDD" id="cd14858">
    <property type="entry name" value="TrmE_N"/>
    <property type="match status" value="1"/>
</dbReference>
<dbReference type="FunFam" id="3.30.1360.120:FF:000003">
    <property type="entry name" value="tRNA modification GTPase MnmE"/>
    <property type="match status" value="1"/>
</dbReference>
<dbReference type="FunFam" id="3.40.50.300:FF:000494">
    <property type="entry name" value="tRNA modification GTPase MnmE"/>
    <property type="match status" value="1"/>
</dbReference>
<dbReference type="Gene3D" id="3.40.50.300">
    <property type="entry name" value="P-loop containing nucleotide triphosphate hydrolases"/>
    <property type="match status" value="1"/>
</dbReference>
<dbReference type="Gene3D" id="3.30.1360.120">
    <property type="entry name" value="Probable tRNA modification gtpase trme, domain 1"/>
    <property type="match status" value="1"/>
</dbReference>
<dbReference type="Gene3D" id="1.20.120.430">
    <property type="entry name" value="tRNA modification GTPase MnmE domain 2"/>
    <property type="match status" value="1"/>
</dbReference>
<dbReference type="HAMAP" id="MF_00379">
    <property type="entry name" value="GTPase_MnmE"/>
    <property type="match status" value="1"/>
</dbReference>
<dbReference type="InterPro" id="IPR031168">
    <property type="entry name" value="G_TrmE"/>
</dbReference>
<dbReference type="InterPro" id="IPR006073">
    <property type="entry name" value="GTP-bd"/>
</dbReference>
<dbReference type="InterPro" id="IPR018948">
    <property type="entry name" value="GTP-bd_TrmE_N"/>
</dbReference>
<dbReference type="InterPro" id="IPR004520">
    <property type="entry name" value="GTPase_MnmE"/>
</dbReference>
<dbReference type="InterPro" id="IPR027368">
    <property type="entry name" value="MnmE_dom2"/>
</dbReference>
<dbReference type="InterPro" id="IPR025867">
    <property type="entry name" value="MnmE_helical"/>
</dbReference>
<dbReference type="InterPro" id="IPR027417">
    <property type="entry name" value="P-loop_NTPase"/>
</dbReference>
<dbReference type="InterPro" id="IPR005225">
    <property type="entry name" value="Small_GTP-bd"/>
</dbReference>
<dbReference type="InterPro" id="IPR027266">
    <property type="entry name" value="TrmE/GcvT_dom1"/>
</dbReference>
<dbReference type="NCBIfam" id="TIGR00450">
    <property type="entry name" value="mnmE_trmE_thdF"/>
    <property type="match status" value="1"/>
</dbReference>
<dbReference type="NCBIfam" id="NF003661">
    <property type="entry name" value="PRK05291.1-3"/>
    <property type="match status" value="1"/>
</dbReference>
<dbReference type="NCBIfam" id="TIGR00231">
    <property type="entry name" value="small_GTP"/>
    <property type="match status" value="1"/>
</dbReference>
<dbReference type="PANTHER" id="PTHR42714">
    <property type="entry name" value="TRNA MODIFICATION GTPASE GTPBP3"/>
    <property type="match status" value="1"/>
</dbReference>
<dbReference type="PANTHER" id="PTHR42714:SF2">
    <property type="entry name" value="TRNA MODIFICATION GTPASE GTPBP3, MITOCHONDRIAL"/>
    <property type="match status" value="1"/>
</dbReference>
<dbReference type="Pfam" id="PF01926">
    <property type="entry name" value="MMR_HSR1"/>
    <property type="match status" value="1"/>
</dbReference>
<dbReference type="Pfam" id="PF12631">
    <property type="entry name" value="MnmE_helical"/>
    <property type="match status" value="1"/>
</dbReference>
<dbReference type="Pfam" id="PF10396">
    <property type="entry name" value="TrmE_N"/>
    <property type="match status" value="1"/>
</dbReference>
<dbReference type="SUPFAM" id="SSF52540">
    <property type="entry name" value="P-loop containing nucleoside triphosphate hydrolases"/>
    <property type="match status" value="1"/>
</dbReference>
<dbReference type="SUPFAM" id="SSF116878">
    <property type="entry name" value="TrmE connector domain"/>
    <property type="match status" value="1"/>
</dbReference>
<dbReference type="PROSITE" id="PS51709">
    <property type="entry name" value="G_TRME"/>
    <property type="match status" value="1"/>
</dbReference>
<accession>B1KUB2</accession>
<comment type="function">
    <text evidence="1">Exhibits a very high intrinsic GTPase hydrolysis rate. Involved in the addition of a carboxymethylaminomethyl (cmnm) group at the wobble position (U34) of certain tRNAs, forming tRNA-cmnm(5)s(2)U34.</text>
</comment>
<comment type="cofactor">
    <cofactor evidence="1">
        <name>K(+)</name>
        <dbReference type="ChEBI" id="CHEBI:29103"/>
    </cofactor>
    <text evidence="1">Binds 1 potassium ion per subunit.</text>
</comment>
<comment type="subunit">
    <text evidence="1">Homodimer. Heterotetramer of two MnmE and two MnmG subunits.</text>
</comment>
<comment type="subcellular location">
    <subcellularLocation>
        <location evidence="1">Cytoplasm</location>
    </subcellularLocation>
</comment>
<comment type="similarity">
    <text evidence="1">Belongs to the TRAFAC class TrmE-Era-EngA-EngB-Septin-like GTPase superfamily. TrmE GTPase family.</text>
</comment>